<reference key="1">
    <citation type="journal article" date="2002" name="DNA Res.">
        <title>Complete genome structure of the thermophilic cyanobacterium Thermosynechococcus elongatus BP-1.</title>
        <authorList>
            <person name="Nakamura Y."/>
            <person name="Kaneko T."/>
            <person name="Sato S."/>
            <person name="Ikeuchi M."/>
            <person name="Katoh H."/>
            <person name="Sasamoto S."/>
            <person name="Watanabe A."/>
            <person name="Iriguchi M."/>
            <person name="Kawashima K."/>
            <person name="Kimura T."/>
            <person name="Kishida Y."/>
            <person name="Kiyokawa C."/>
            <person name="Kohara M."/>
            <person name="Matsumoto M."/>
            <person name="Matsuno A."/>
            <person name="Nakazaki N."/>
            <person name="Shimpo S."/>
            <person name="Sugimoto M."/>
            <person name="Takeuchi C."/>
            <person name="Yamada M."/>
            <person name="Tabata S."/>
        </authorList>
    </citation>
    <scope>NUCLEOTIDE SEQUENCE [LARGE SCALE GENOMIC DNA]</scope>
    <source>
        <strain>NIES-2133 / IAM M-273 / BP-1</strain>
    </source>
</reference>
<reference key="2">
    <citation type="journal article" date="2008" name="Acta Biochim. Pol.">
        <title>Heterologous expression and initial characterization of recombinant RbcX protein from Thermosynechococcus elongatus BP-1 and the role of RbcX in RuBisCO assembly.</title>
        <authorList>
            <person name="Tarnawski M."/>
            <person name="Gubernator B."/>
            <person name="Kolesinski P."/>
            <person name="Szczepaniak A."/>
        </authorList>
    </citation>
    <scope>RUBISCO FOLDING AND ASSEMBLY</scope>
    <scope>SUBUNIT</scope>
    <scope>SUBCELLULAR LOCATION</scope>
    <source>
        <strain>NIES-2133 / IAM M-273 / BP-1</strain>
    </source>
</reference>
<reference key="3">
    <citation type="journal article" date="2014" name="FEBS J.">
        <title>Rubisco Accumulation Factor 1 from Thermosynechococcus elongatus participates in the final stages of ribulose-1,5-bisphosphate carboxylase/oxygenase assembly in Escherichia coli cells and in vitro.</title>
        <authorList>
            <person name="Kolesinski P."/>
            <person name="Belusiak I."/>
            <person name="Czarnocki-Cieciura M."/>
            <person name="Szczepaniak A."/>
        </authorList>
    </citation>
    <scope>FUNCTION</scope>
    <scope>SUBUNIT</scope>
    <scope>SUBCELLULAR LOCATION</scope>
    <source>
        <strain>NIES-2133 / IAM M-273 / BP-1</strain>
    </source>
</reference>
<reference evidence="9 10" key="4">
    <citation type="submission" date="2011-03" db="PDB data bank">
        <title>Structure of Ribulose-1,5-Bisphosphate Carboxylase Oxygenase from Thermosynechococcus Elongatus.</title>
        <authorList>
            <person name="Terlecka B."/>
            <person name="Wilhelmi V."/>
            <person name="Bialek W."/>
            <person name="Gubernator B."/>
            <person name="Szczepaniak A."/>
            <person name="Hofmann E."/>
        </authorList>
    </citation>
    <scope>X-RAY CRYSTALLOGRAPHY (2.30 ANGSTROMS)</scope>
    <scope>SUBUNIT</scope>
    <source>
        <strain>NIES-2133 / IAM M-273 / BP-1</strain>
    </source>
</reference>
<name>RBS_THEVB</name>
<comment type="function">
    <text evidence="2 3">RuBisCO catalyzes two reactions: the carboxylation of D-ribulose 1,5-bisphosphate, the primary event in carbon dioxide fixation, as well as the oxidative fragmentation of the pentose substrate in the photorespiration process. Both reactions occur simultaneously and in competition at the same active site. Although the small subunit is not catalytic it is essential for maximal activity.</text>
</comment>
<comment type="subunit">
    <text evidence="2 3 4">Heterohexadecamer of 8 large and 8 small subunits.</text>
</comment>
<comment type="subcellular location">
    <subcellularLocation>
        <location evidence="2 8">Carboxysome</location>
    </subcellularLocation>
    <text evidence="6">This cyanobacterium makes beta-type carboxysomes.</text>
</comment>
<comment type="miscellaneous">
    <text evidence="1 7 8">RuBisCO folding and assembly commences when the nascent large subunit folds with the help of chaperonin GroEL-GroES. Both RbcX and Raf1 help folded RbcL release from the chaperonin and dimerize (Probable). Dimeric Raf1 binds to RbcL(2) leading to an RbcL8-Raf1(8) complex. RbcS displaces Raf1, resulting in holoenzyme formation (By similarity).</text>
</comment>
<comment type="miscellaneous">
    <text evidence="2 4">The basic functional RuBisCO is composed of a large chain homodimer in a 'head-to-tail' conformation. In form I RuBisCO this homodimer is arranged in a barrel-like tetramer with the small subunits forming a tetrameric 'cap' on each end of the 'barrel'.</text>
</comment>
<comment type="similarity">
    <text evidence="2">Belongs to the RuBisCO small chain family.</text>
</comment>
<proteinExistence type="evidence at protein level"/>
<dbReference type="EMBL" id="BA000039">
    <property type="protein sequence ID" value="BAC09056.1"/>
    <property type="molecule type" value="Genomic_DNA"/>
</dbReference>
<dbReference type="RefSeq" id="NP_682294.1">
    <property type="nucleotide sequence ID" value="NC_004113.1"/>
</dbReference>
<dbReference type="RefSeq" id="WP_011057344.1">
    <property type="nucleotide sequence ID" value="NC_004113.1"/>
</dbReference>
<dbReference type="PDB" id="2YBV">
    <property type="method" value="X-ray"/>
    <property type="resolution" value="2.30 A"/>
    <property type="chains" value="B/D/F/H/J/L/N/P=1-118"/>
</dbReference>
<dbReference type="PDB" id="3ZXW">
    <property type="method" value="X-ray"/>
    <property type="resolution" value="2.10 A"/>
    <property type="chains" value="B/D/F/H=1-118"/>
</dbReference>
<dbReference type="PDBsum" id="2YBV"/>
<dbReference type="PDBsum" id="3ZXW"/>
<dbReference type="SMR" id="Q8DIS7"/>
<dbReference type="STRING" id="197221.gene:10748104"/>
<dbReference type="EnsemblBacteria" id="BAC09056">
    <property type="protein sequence ID" value="BAC09056"/>
    <property type="gene ID" value="BAC09056"/>
</dbReference>
<dbReference type="KEGG" id="tel:tll1504"/>
<dbReference type="PATRIC" id="fig|197221.4.peg.1578"/>
<dbReference type="eggNOG" id="COG4451">
    <property type="taxonomic scope" value="Bacteria"/>
</dbReference>
<dbReference type="EvolutionaryTrace" id="Q8DIS7"/>
<dbReference type="Proteomes" id="UP000000440">
    <property type="component" value="Chromosome"/>
</dbReference>
<dbReference type="GO" id="GO:0031470">
    <property type="term" value="C:carboxysome"/>
    <property type="evidence" value="ECO:0007669"/>
    <property type="project" value="UniProtKB-SubCell"/>
</dbReference>
<dbReference type="GO" id="GO:0016984">
    <property type="term" value="F:ribulose-bisphosphate carboxylase activity"/>
    <property type="evidence" value="ECO:0007669"/>
    <property type="project" value="UniProtKB-UniRule"/>
</dbReference>
<dbReference type="GO" id="GO:0009853">
    <property type="term" value="P:photorespiration"/>
    <property type="evidence" value="ECO:0007669"/>
    <property type="project" value="UniProtKB-KW"/>
</dbReference>
<dbReference type="GO" id="GO:0019253">
    <property type="term" value="P:reductive pentose-phosphate cycle"/>
    <property type="evidence" value="ECO:0007669"/>
    <property type="project" value="UniProtKB-UniRule"/>
</dbReference>
<dbReference type="CDD" id="cd03527">
    <property type="entry name" value="RuBisCO_small"/>
    <property type="match status" value="1"/>
</dbReference>
<dbReference type="Gene3D" id="3.30.190.10">
    <property type="entry name" value="Ribulose bisphosphate carboxylase, small subunit"/>
    <property type="match status" value="1"/>
</dbReference>
<dbReference type="HAMAP" id="MF_00859">
    <property type="entry name" value="RuBisCO_S_bact"/>
    <property type="match status" value="1"/>
</dbReference>
<dbReference type="InterPro" id="IPR024681">
    <property type="entry name" value="RuBisCO_ssu"/>
</dbReference>
<dbReference type="InterPro" id="IPR000894">
    <property type="entry name" value="RuBisCO_ssu_dom"/>
</dbReference>
<dbReference type="InterPro" id="IPR036385">
    <property type="entry name" value="RuBisCO_ssu_sf"/>
</dbReference>
<dbReference type="PANTHER" id="PTHR31262">
    <property type="entry name" value="RIBULOSE BISPHOSPHATE CARBOXYLASE SMALL CHAIN 1, CHLOROPLASTIC"/>
    <property type="match status" value="1"/>
</dbReference>
<dbReference type="Pfam" id="PF00101">
    <property type="entry name" value="RuBisCO_small"/>
    <property type="match status" value="1"/>
</dbReference>
<dbReference type="PRINTS" id="PR00152">
    <property type="entry name" value="RUBISCOSMALL"/>
</dbReference>
<dbReference type="SMART" id="SM00961">
    <property type="entry name" value="RuBisCO_small"/>
    <property type="match status" value="1"/>
</dbReference>
<dbReference type="SUPFAM" id="SSF55239">
    <property type="entry name" value="RuBisCO, small subunit"/>
    <property type="match status" value="1"/>
</dbReference>
<keyword id="KW-0002">3D-structure</keyword>
<keyword id="KW-1283">Bacterial microcompartment</keyword>
<keyword id="KW-0113">Calvin cycle</keyword>
<keyword id="KW-0120">Carbon dioxide fixation</keyword>
<keyword id="KW-1282">Carboxysome</keyword>
<keyword id="KW-0601">Photorespiration</keyword>
<keyword id="KW-0602">Photosynthesis</keyword>
<keyword id="KW-1185">Reference proteome</keyword>
<sequence>MKTLPKERRYETFSYLPPLSDAQIARQIQYAIDQGYHPCVEFNETSNAEIRYWTMWKLPLFNCTNAQDVLNEVQQCRSEYPNCFIRVVAFDNIKQCQVMSFIVYKPNQANSGYSGYRY</sequence>
<gene>
    <name evidence="2" type="primary">cbbS</name>
    <name evidence="2 5" type="synonym">rbcS</name>
    <name type="ordered locus">tll1504</name>
</gene>
<evidence type="ECO:0000250" key="1">
    <source>
        <dbReference type="UniProtKB" id="P00879"/>
    </source>
</evidence>
<evidence type="ECO:0000255" key="2">
    <source>
        <dbReference type="HAMAP-Rule" id="MF_00859"/>
    </source>
</evidence>
<evidence type="ECO:0000269" key="3">
    <source>
    </source>
</evidence>
<evidence type="ECO:0000269" key="4">
    <source ref="4"/>
</evidence>
<evidence type="ECO:0000303" key="5">
    <source>
    </source>
</evidence>
<evidence type="ECO:0000305" key="6"/>
<evidence type="ECO:0000305" key="7">
    <source>
    </source>
</evidence>
<evidence type="ECO:0000305" key="8">
    <source>
    </source>
</evidence>
<evidence type="ECO:0007744" key="9">
    <source>
        <dbReference type="PDB" id="2YBV"/>
    </source>
</evidence>
<evidence type="ECO:0007744" key="10">
    <source>
        <dbReference type="PDB" id="3ZXW"/>
    </source>
</evidence>
<evidence type="ECO:0007829" key="11">
    <source>
        <dbReference type="PDB" id="2YBV"/>
    </source>
</evidence>
<evidence type="ECO:0007829" key="12">
    <source>
        <dbReference type="PDB" id="3ZXW"/>
    </source>
</evidence>
<accession>Q8DIS7</accession>
<feature type="chain" id="PRO_0000451581" description="Ribulose bisphosphate carboxylase small subunit">
    <location>
        <begin position="1"/>
        <end position="118"/>
    </location>
</feature>
<feature type="turn" evidence="11">
    <location>
        <begin position="12"/>
        <end position="15"/>
    </location>
</feature>
<feature type="helix" evidence="12">
    <location>
        <begin position="21"/>
        <end position="34"/>
    </location>
</feature>
<feature type="strand" evidence="12">
    <location>
        <begin position="37"/>
        <end position="44"/>
    </location>
</feature>
<feature type="strand" evidence="12">
    <location>
        <begin position="54"/>
        <end position="58"/>
    </location>
</feature>
<feature type="helix" evidence="12">
    <location>
        <begin position="66"/>
        <end position="79"/>
    </location>
</feature>
<feature type="strand" evidence="12">
    <location>
        <begin position="83"/>
        <end position="91"/>
    </location>
</feature>
<feature type="turn" evidence="12">
    <location>
        <begin position="92"/>
        <end position="95"/>
    </location>
</feature>
<feature type="strand" evidence="12">
    <location>
        <begin position="96"/>
        <end position="104"/>
    </location>
</feature>
<organism>
    <name type="scientific">Thermosynechococcus vestitus (strain NIES-2133 / IAM M-273 / BP-1)</name>
    <dbReference type="NCBI Taxonomy" id="197221"/>
    <lineage>
        <taxon>Bacteria</taxon>
        <taxon>Bacillati</taxon>
        <taxon>Cyanobacteriota</taxon>
        <taxon>Cyanophyceae</taxon>
        <taxon>Acaryochloridales</taxon>
        <taxon>Thermosynechococcaceae</taxon>
        <taxon>Thermosynechococcus</taxon>
    </lineage>
</organism>
<protein>
    <recommendedName>
        <fullName evidence="2">Ribulose bisphosphate carboxylase small subunit</fullName>
        <shortName evidence="2">RuBisCO small subunit</shortName>
    </recommendedName>
</protein>